<proteinExistence type="inferred from homology"/>
<feature type="chain" id="PRO_0000271437" description="B1 bradykinin receptor">
    <location>
        <begin position="1"/>
        <end position="352"/>
    </location>
</feature>
<feature type="topological domain" description="Extracellular" evidence="2">
    <location>
        <begin position="1"/>
        <end position="41"/>
    </location>
</feature>
<feature type="transmembrane region" description="Helical; Name=1" evidence="2">
    <location>
        <begin position="42"/>
        <end position="62"/>
    </location>
</feature>
<feature type="topological domain" description="Cytoplasmic" evidence="2">
    <location>
        <begin position="63"/>
        <end position="72"/>
    </location>
</feature>
<feature type="transmembrane region" description="Helical; Name=2" evidence="2">
    <location>
        <begin position="73"/>
        <end position="93"/>
    </location>
</feature>
<feature type="topological domain" description="Extracellular" evidence="2">
    <location>
        <begin position="94"/>
        <end position="110"/>
    </location>
</feature>
<feature type="transmembrane region" description="Helical; Name=3" evidence="2">
    <location>
        <begin position="111"/>
        <end position="131"/>
    </location>
</feature>
<feature type="topological domain" description="Cytoplasmic" evidence="2">
    <location>
        <begin position="132"/>
        <end position="153"/>
    </location>
</feature>
<feature type="transmembrane region" description="Helical; Name=4" evidence="2">
    <location>
        <begin position="154"/>
        <end position="174"/>
    </location>
</feature>
<feature type="topological domain" description="Extracellular" evidence="2">
    <location>
        <begin position="175"/>
        <end position="206"/>
    </location>
</feature>
<feature type="transmembrane region" description="Helical; Name=5" evidence="2">
    <location>
        <begin position="207"/>
        <end position="227"/>
    </location>
</feature>
<feature type="topological domain" description="Cytoplasmic" evidence="2">
    <location>
        <begin position="228"/>
        <end position="250"/>
    </location>
</feature>
<feature type="transmembrane region" description="Helical; Name=6" evidence="2">
    <location>
        <begin position="251"/>
        <end position="271"/>
    </location>
</feature>
<feature type="topological domain" description="Extracellular" evidence="2">
    <location>
        <begin position="272"/>
        <end position="294"/>
    </location>
</feature>
<feature type="transmembrane region" description="Helical; Name=7" evidence="2">
    <location>
        <begin position="295"/>
        <end position="315"/>
    </location>
</feature>
<feature type="topological domain" description="Cytoplasmic" evidence="2">
    <location>
        <begin position="316"/>
        <end position="352"/>
    </location>
</feature>
<feature type="lipid moiety-binding region" description="S-palmitoyl cysteine" evidence="2">
    <location>
        <position position="329"/>
    </location>
</feature>
<feature type="glycosylation site" description="N-linked (GlcNAc...) asparagine" evidence="2">
    <location>
        <position position="13"/>
    </location>
</feature>
<feature type="glycosylation site" description="N-linked (GlcNAc...) asparagine" evidence="2">
    <location>
        <position position="21"/>
    </location>
</feature>
<feature type="glycosylation site" description="N-linked (GlcNAc...) asparagine" evidence="2">
    <location>
        <position position="184"/>
    </location>
</feature>
<feature type="disulfide bond" evidence="3">
    <location>
        <begin position="109"/>
        <end position="188"/>
    </location>
</feature>
<dbReference type="EMBL" id="AY045569">
    <property type="protein sequence ID" value="AAK95387.1"/>
    <property type="molecule type" value="Genomic_DNA"/>
</dbReference>
<dbReference type="SMR" id="Q95L01"/>
<dbReference type="GlyCosmos" id="Q95L01">
    <property type="glycosylation" value="3 sites, No reported glycans"/>
</dbReference>
<dbReference type="GO" id="GO:0009897">
    <property type="term" value="C:external side of plasma membrane"/>
    <property type="evidence" value="ECO:0007669"/>
    <property type="project" value="TreeGrafter"/>
</dbReference>
<dbReference type="GO" id="GO:0004947">
    <property type="term" value="F:bradykinin receptor activity"/>
    <property type="evidence" value="ECO:0007669"/>
    <property type="project" value="InterPro"/>
</dbReference>
<dbReference type="GO" id="GO:0019957">
    <property type="term" value="F:C-C chemokine binding"/>
    <property type="evidence" value="ECO:0007669"/>
    <property type="project" value="TreeGrafter"/>
</dbReference>
<dbReference type="GO" id="GO:0016493">
    <property type="term" value="F:C-C chemokine receptor activity"/>
    <property type="evidence" value="ECO:0007669"/>
    <property type="project" value="TreeGrafter"/>
</dbReference>
<dbReference type="GO" id="GO:0019722">
    <property type="term" value="P:calcium-mediated signaling"/>
    <property type="evidence" value="ECO:0007669"/>
    <property type="project" value="TreeGrafter"/>
</dbReference>
<dbReference type="GO" id="GO:0060326">
    <property type="term" value="P:cell chemotaxis"/>
    <property type="evidence" value="ECO:0007669"/>
    <property type="project" value="TreeGrafter"/>
</dbReference>
<dbReference type="GO" id="GO:0006955">
    <property type="term" value="P:immune response"/>
    <property type="evidence" value="ECO:0007669"/>
    <property type="project" value="TreeGrafter"/>
</dbReference>
<dbReference type="GO" id="GO:0006954">
    <property type="term" value="P:inflammatory response"/>
    <property type="evidence" value="ECO:0007669"/>
    <property type="project" value="InterPro"/>
</dbReference>
<dbReference type="GO" id="GO:0007204">
    <property type="term" value="P:positive regulation of cytosolic calcium ion concentration"/>
    <property type="evidence" value="ECO:0007669"/>
    <property type="project" value="TreeGrafter"/>
</dbReference>
<dbReference type="GO" id="GO:0009612">
    <property type="term" value="P:response to mechanical stimulus"/>
    <property type="evidence" value="ECO:0007669"/>
    <property type="project" value="InterPro"/>
</dbReference>
<dbReference type="FunFam" id="1.20.1070.10:FF:000295">
    <property type="entry name" value="B1 bradykinin receptor"/>
    <property type="match status" value="1"/>
</dbReference>
<dbReference type="Gene3D" id="1.20.1070.10">
    <property type="entry name" value="Rhodopsin 7-helix transmembrane proteins"/>
    <property type="match status" value="1"/>
</dbReference>
<dbReference type="InterPro" id="IPR001186">
    <property type="entry name" value="Brdyknn_1_rcpt"/>
</dbReference>
<dbReference type="InterPro" id="IPR000496">
    <property type="entry name" value="Brdyknn_rcpt"/>
</dbReference>
<dbReference type="InterPro" id="IPR050119">
    <property type="entry name" value="CCR1-9-like"/>
</dbReference>
<dbReference type="InterPro" id="IPR000276">
    <property type="entry name" value="GPCR_Rhodpsn"/>
</dbReference>
<dbReference type="InterPro" id="IPR017452">
    <property type="entry name" value="GPCR_Rhodpsn_7TM"/>
</dbReference>
<dbReference type="PANTHER" id="PTHR10489:SF957">
    <property type="entry name" value="B2 BRADYKININ RECEPTOR"/>
    <property type="match status" value="1"/>
</dbReference>
<dbReference type="PANTHER" id="PTHR10489">
    <property type="entry name" value="CELL ADHESION MOLECULE"/>
    <property type="match status" value="1"/>
</dbReference>
<dbReference type="Pfam" id="PF00001">
    <property type="entry name" value="7tm_1"/>
    <property type="match status" value="1"/>
</dbReference>
<dbReference type="PRINTS" id="PR00425">
    <property type="entry name" value="BRADYKININR"/>
</dbReference>
<dbReference type="PRINTS" id="PR00993">
    <property type="entry name" value="BRADYKINNB1R"/>
</dbReference>
<dbReference type="PRINTS" id="PR00237">
    <property type="entry name" value="GPCRRHODOPSN"/>
</dbReference>
<dbReference type="SUPFAM" id="SSF81321">
    <property type="entry name" value="Family A G protein-coupled receptor-like"/>
    <property type="match status" value="1"/>
</dbReference>
<dbReference type="PROSITE" id="PS50262">
    <property type="entry name" value="G_PROTEIN_RECEP_F1_2"/>
    <property type="match status" value="1"/>
</dbReference>
<sequence length="352" mass="40273">MASWPPLELQSSNQSQLFPQNATACDNAPEAWDLLHRVLPTFIISICSFGLLGNLFVLLVFLLPRRRLNVAEIYLANLAASDLVFVLGLPFWAENIWNQFNWPFGALLCRGINGVIKANLFISIFLVVAISQDRYCLLVHPMASRRRQRRRQARVTCVLIWVVGGLLSIPTFLLRSIQAVPDLNITACILLLPHEAWHFARIVELNILAFLLPLAAIVFFNYHILASLRGREEVSRTRCGGRKDSKTTALILTLVVAFLVCWAPYHFFAFLEFLFQVQAIRGCFWEDFIDLGLQLANFLAFTNSSLNPVIYVFVGRLFRTKVWELYKQCTPKSLAPISSSHRKEIFQLFWRN</sequence>
<accession>Q95L01</accession>
<reference key="1">
    <citation type="submission" date="2001-07" db="EMBL/GenBank/DDBJ databases">
        <title>Molecular cloning of African green monkey B1 bradykinin receptor.</title>
        <authorList>
            <person name="Hess F."/>
            <person name="Hey P."/>
        </authorList>
    </citation>
    <scope>NUCLEOTIDE SEQUENCE [GENOMIC DNA]</scope>
</reference>
<organism>
    <name type="scientific">Chlorocebus aethiops</name>
    <name type="common">Green monkey</name>
    <name type="synonym">Cercopithecus aethiops</name>
    <dbReference type="NCBI Taxonomy" id="9534"/>
    <lineage>
        <taxon>Eukaryota</taxon>
        <taxon>Metazoa</taxon>
        <taxon>Chordata</taxon>
        <taxon>Craniata</taxon>
        <taxon>Vertebrata</taxon>
        <taxon>Euteleostomi</taxon>
        <taxon>Mammalia</taxon>
        <taxon>Eutheria</taxon>
        <taxon>Euarchontoglires</taxon>
        <taxon>Primates</taxon>
        <taxon>Haplorrhini</taxon>
        <taxon>Catarrhini</taxon>
        <taxon>Cercopithecidae</taxon>
        <taxon>Cercopithecinae</taxon>
        <taxon>Chlorocebus</taxon>
    </lineage>
</organism>
<name>BKRB1_CHLAE</name>
<keyword id="KW-1003">Cell membrane</keyword>
<keyword id="KW-1015">Disulfide bond</keyword>
<keyword id="KW-0297">G-protein coupled receptor</keyword>
<keyword id="KW-0325">Glycoprotein</keyword>
<keyword id="KW-0449">Lipoprotein</keyword>
<keyword id="KW-0472">Membrane</keyword>
<keyword id="KW-0564">Palmitate</keyword>
<keyword id="KW-0675">Receptor</keyword>
<keyword id="KW-0807">Transducer</keyword>
<keyword id="KW-0812">Transmembrane</keyword>
<keyword id="KW-1133">Transmembrane helix</keyword>
<protein>
    <recommendedName>
        <fullName>B1 bradykinin receptor</fullName>
        <shortName>B1R</shortName>
        <shortName>BK-1 receptor</shortName>
    </recommendedName>
</protein>
<gene>
    <name type="primary">BDKRB1</name>
</gene>
<evidence type="ECO:0000250" key="1">
    <source>
        <dbReference type="UniProtKB" id="P46663"/>
    </source>
</evidence>
<evidence type="ECO:0000255" key="2"/>
<evidence type="ECO:0000255" key="3">
    <source>
        <dbReference type="PROSITE-ProRule" id="PRU00521"/>
    </source>
</evidence>
<comment type="function">
    <text evidence="1">This is a receptor for bradykinin. Could be a factor in chronic pain and inflammation.</text>
</comment>
<comment type="subcellular location">
    <subcellularLocation>
        <location evidence="1">Cell membrane</location>
        <topology evidence="2">Multi-pass membrane protein</topology>
    </subcellularLocation>
</comment>
<comment type="similarity">
    <text evidence="3">Belongs to the G-protein coupled receptor 1 family. Bradykinin receptor subfamily. BDKRB1 sub-subfamily.</text>
</comment>